<dbReference type="EMBL" id="U00096">
    <property type="protein sequence ID" value="QNV50531.1"/>
    <property type="molecule type" value="Genomic_DNA"/>
</dbReference>
<dbReference type="InParanoid" id="P0DSF6"/>
<dbReference type="BioCyc" id="EcoCyc:MONOMER0-4490"/>
<dbReference type="Proteomes" id="UP000000625">
    <property type="component" value="Chromosome"/>
</dbReference>
<protein>
    <recommendedName>
        <fullName evidence="2">Protein YecV</fullName>
    </recommendedName>
</protein>
<evidence type="ECO:0000269" key="1">
    <source>
    </source>
</evidence>
<evidence type="ECO:0000303" key="2">
    <source>
    </source>
</evidence>
<evidence type="ECO:0000312" key="3">
    <source>
        <dbReference type="EMBL" id="QNV50531.1"/>
    </source>
</evidence>
<organism>
    <name type="scientific">Escherichia coli (strain K12)</name>
    <dbReference type="NCBI Taxonomy" id="83333"/>
    <lineage>
        <taxon>Bacteria</taxon>
        <taxon>Pseudomonadati</taxon>
        <taxon>Pseudomonadota</taxon>
        <taxon>Gammaproteobacteria</taxon>
        <taxon>Enterobacterales</taxon>
        <taxon>Enterobacteriaceae</taxon>
        <taxon>Escherichia</taxon>
    </lineage>
</organism>
<comment type="induction">
    <text evidence="1">Expressed in both exponential and stationary phase in rich medium; expression is higher in exponential phase (at protein level).</text>
</comment>
<reference key="1">
    <citation type="journal article" date="1997" name="Science">
        <title>The complete genome sequence of Escherichia coli K-12.</title>
        <authorList>
            <person name="Blattner F.R."/>
            <person name="Plunkett G. III"/>
            <person name="Bloch C.A."/>
            <person name="Perna N.T."/>
            <person name="Burland V."/>
            <person name="Riley M."/>
            <person name="Collado-Vides J."/>
            <person name="Glasner J.D."/>
            <person name="Rode C.K."/>
            <person name="Mayhew G.F."/>
            <person name="Gregor J."/>
            <person name="Davis N.W."/>
            <person name="Kirkpatrick H.A."/>
            <person name="Goeden M.A."/>
            <person name="Rose D.J."/>
            <person name="Mau B."/>
            <person name="Shao Y."/>
        </authorList>
    </citation>
    <scope>NUCLEOTIDE SEQUENCE [LARGE SCALE GENOMIC DNA]</scope>
    <source>
        <strain>K12 / MG1655 / ATCC 47076</strain>
    </source>
</reference>
<reference key="2">
    <citation type="journal article" date="2019" name="MBio">
        <title>Identifying small proteins by ribosome profiling with stalled initiation complexes.</title>
        <authorList>
            <person name="Weaver J."/>
            <person name="Mohammad F."/>
            <person name="Buskirk A.R."/>
            <person name="Storz G."/>
        </authorList>
    </citation>
    <scope>IDENTIFICATION</scope>
    <scope>INDUCTION</scope>
    <source>
        <strain>K12 / MG1655 / ATCC 47076</strain>
    </source>
</reference>
<name>YECV_ECOLI</name>
<proteinExistence type="evidence at protein level"/>
<sequence length="14" mass="1630">MSIFRIHLDGNKKA</sequence>
<feature type="chain" id="PRO_0000447146" description="Protein YecV">
    <location>
        <begin position="1"/>
        <end position="14"/>
    </location>
</feature>
<accession>P0DSF6</accession>
<accession>A0A7H2C784</accession>
<gene>
    <name evidence="2" type="primary">yecV</name>
    <name evidence="3" type="ordered locus">b4778</name>
</gene>
<keyword id="KW-1185">Reference proteome</keyword>